<proteinExistence type="evidence at transcript level"/>
<protein>
    <recommendedName>
        <fullName>C-type lectin BfL-1</fullName>
        <shortName>CTL</shortName>
    </recommendedName>
</protein>
<dbReference type="EMBL" id="AF354270">
    <property type="protein sequence ID" value="AAK43584.1"/>
    <property type="molecule type" value="mRNA"/>
</dbReference>
<dbReference type="SMR" id="Q90WI8"/>
<dbReference type="GO" id="GO:0005576">
    <property type="term" value="C:extracellular region"/>
    <property type="evidence" value="ECO:0007669"/>
    <property type="project" value="UniProtKB-SubCell"/>
</dbReference>
<dbReference type="GO" id="GO:0030246">
    <property type="term" value="F:carbohydrate binding"/>
    <property type="evidence" value="ECO:0007669"/>
    <property type="project" value="UniProtKB-KW"/>
</dbReference>
<dbReference type="GO" id="GO:0046872">
    <property type="term" value="F:metal ion binding"/>
    <property type="evidence" value="ECO:0007669"/>
    <property type="project" value="UniProtKB-KW"/>
</dbReference>
<dbReference type="CDD" id="cd03594">
    <property type="entry name" value="CLECT_REG-1_like"/>
    <property type="match status" value="1"/>
</dbReference>
<dbReference type="FunFam" id="3.10.100.10:FF:000015">
    <property type="entry name" value="C-type lectin Cal"/>
    <property type="match status" value="1"/>
</dbReference>
<dbReference type="Gene3D" id="3.10.100.10">
    <property type="entry name" value="Mannose-Binding Protein A, subunit A"/>
    <property type="match status" value="1"/>
</dbReference>
<dbReference type="InterPro" id="IPR001304">
    <property type="entry name" value="C-type_lectin-like"/>
</dbReference>
<dbReference type="InterPro" id="IPR016186">
    <property type="entry name" value="C-type_lectin-like/link_sf"/>
</dbReference>
<dbReference type="InterPro" id="IPR050111">
    <property type="entry name" value="C-type_lectin/snaclec_domain"/>
</dbReference>
<dbReference type="InterPro" id="IPR018378">
    <property type="entry name" value="C-type_lectin_CS"/>
</dbReference>
<dbReference type="InterPro" id="IPR016187">
    <property type="entry name" value="CTDL_fold"/>
</dbReference>
<dbReference type="PANTHER" id="PTHR22803">
    <property type="entry name" value="MANNOSE, PHOSPHOLIPASE, LECTIN RECEPTOR RELATED"/>
    <property type="match status" value="1"/>
</dbReference>
<dbReference type="Pfam" id="PF00059">
    <property type="entry name" value="Lectin_C"/>
    <property type="match status" value="1"/>
</dbReference>
<dbReference type="PRINTS" id="PR01504">
    <property type="entry name" value="PNCREATITSAP"/>
</dbReference>
<dbReference type="SMART" id="SM00034">
    <property type="entry name" value="CLECT"/>
    <property type="match status" value="1"/>
</dbReference>
<dbReference type="SUPFAM" id="SSF56436">
    <property type="entry name" value="C-type lectin-like"/>
    <property type="match status" value="1"/>
</dbReference>
<dbReference type="PROSITE" id="PS00615">
    <property type="entry name" value="C_TYPE_LECTIN_1"/>
    <property type="match status" value="1"/>
</dbReference>
<dbReference type="PROSITE" id="PS50041">
    <property type="entry name" value="C_TYPE_LECTIN_2"/>
    <property type="match status" value="1"/>
</dbReference>
<organism>
    <name type="scientific">Bungarus fasciatus</name>
    <name type="common">Banded krait</name>
    <name type="synonym">Pseudoboa fasciata</name>
    <dbReference type="NCBI Taxonomy" id="8613"/>
    <lineage>
        <taxon>Eukaryota</taxon>
        <taxon>Metazoa</taxon>
        <taxon>Chordata</taxon>
        <taxon>Craniata</taxon>
        <taxon>Vertebrata</taxon>
        <taxon>Euteleostomi</taxon>
        <taxon>Lepidosauria</taxon>
        <taxon>Squamata</taxon>
        <taxon>Bifurcata</taxon>
        <taxon>Unidentata</taxon>
        <taxon>Episquamata</taxon>
        <taxon>Toxicofera</taxon>
        <taxon>Serpentes</taxon>
        <taxon>Colubroidea</taxon>
        <taxon>Elapidae</taxon>
        <taxon>Bungarinae</taxon>
        <taxon>Bungarus</taxon>
    </lineage>
</organism>
<accession>Q90WI8</accession>
<reference key="1">
    <citation type="journal article" date="2001" name="Toxicon">
        <title>Cloning of cDNAs encoding C-type lectins from Elapidae snakes Bungarus fasciatus and Bungarus multicinctus.</title>
        <authorList>
            <person name="Zha H.-G."/>
            <person name="Lee W.-H."/>
            <person name="Zhang Y."/>
        </authorList>
    </citation>
    <scope>NUCLEOTIDE SEQUENCE [MRNA]</scope>
    <source>
        <tissue>Venom gland</tissue>
    </source>
</reference>
<reference key="2">
    <citation type="journal article" date="2006" name="Toxicon">
        <title>Structure-function inferences based on molecular modeling, sequence-based methods and biological data analysis of snake venom lectins.</title>
        <authorList>
            <person name="Abreu P.A."/>
            <person name="Albuquerque M.G."/>
            <person name="Rodrigues C.R."/>
            <person name="Castro H.C."/>
        </authorList>
    </citation>
    <scope>3D-STRUCTURE MODELING</scope>
</reference>
<comment type="function">
    <text evidence="1">Galactose-binding lectin which recognizes specific carbohydrate structures and agglutinates a variety of animal cells by binding to cell-surface glycoproteins and glycolipids. May be a calcium-dependent lectin (By similarity).</text>
</comment>
<comment type="subunit">
    <text evidence="4">Homodimer; non-covalently linked.</text>
</comment>
<comment type="subcellular location">
    <subcellularLocation>
        <location evidence="1">Secreted</location>
    </subcellularLocation>
</comment>
<comment type="tissue specificity">
    <text>Expressed by the venom gland.</text>
</comment>
<comment type="similarity">
    <text evidence="4">Belongs to the true venom lectin family.</text>
</comment>
<keyword id="KW-0106">Calcium</keyword>
<keyword id="KW-1015">Disulfide bond</keyword>
<keyword id="KW-0325">Glycoprotein</keyword>
<keyword id="KW-0430">Lectin</keyword>
<keyword id="KW-0479">Metal-binding</keyword>
<keyword id="KW-0964">Secreted</keyword>
<keyword id="KW-0732">Signal</keyword>
<name>LECG1_BUNFA</name>
<sequence>MGHFTFIGLCLLAMFLSLSGAECYTCPIDWLPKNGLCYKVFSKHKTWFDAEMYCRKFKPGCHLASLHSNADAVEFSEYISDYLTGQGHVWIGLRDTKKKYIWEWTDRSRTDFLPWRKKQPDHFNNNEFCVEIVNFTGYLQWNDDNCAALRPFLCQCKY</sequence>
<evidence type="ECO:0000250" key="1"/>
<evidence type="ECO:0000255" key="2"/>
<evidence type="ECO:0000255" key="3">
    <source>
        <dbReference type="PROSITE-ProRule" id="PRU00040"/>
    </source>
</evidence>
<evidence type="ECO:0000305" key="4"/>
<feature type="signal peptide" evidence="2">
    <location>
        <begin position="1"/>
        <end position="21"/>
    </location>
</feature>
<feature type="chain" id="PRO_0000355258" description="C-type lectin BfL-1">
    <location>
        <begin position="22"/>
        <end position="158"/>
    </location>
</feature>
<feature type="domain" description="C-type lectin" evidence="3">
    <location>
        <begin position="33"/>
        <end position="155"/>
    </location>
</feature>
<feature type="short sequence motif" description="Galactose-binding">
    <location>
        <begin position="119"/>
        <end position="121"/>
    </location>
</feature>
<feature type="binding site" evidence="1">
    <location>
        <position position="119"/>
    </location>
    <ligand>
        <name>Ca(2+)</name>
        <dbReference type="ChEBI" id="CHEBI:29108"/>
    </ligand>
</feature>
<feature type="binding site" evidence="1">
    <location>
        <position position="121"/>
    </location>
    <ligand>
        <name>Ca(2+)</name>
        <dbReference type="ChEBI" id="CHEBI:29108"/>
    </ligand>
</feature>
<feature type="binding site" evidence="1">
    <location>
        <position position="127"/>
    </location>
    <ligand>
        <name>Ca(2+)</name>
        <dbReference type="ChEBI" id="CHEBI:29108"/>
    </ligand>
</feature>
<feature type="binding site" evidence="1">
    <location>
        <position position="142"/>
    </location>
    <ligand>
        <name>Ca(2+)</name>
        <dbReference type="ChEBI" id="CHEBI:29108"/>
    </ligand>
</feature>
<feature type="binding site" evidence="1">
    <location>
        <position position="143"/>
    </location>
    <ligand>
        <name>Ca(2+)</name>
        <dbReference type="ChEBI" id="CHEBI:29108"/>
    </ligand>
</feature>
<feature type="glycosylation site" description="N-linked (GlcNAc...) asparagine" evidence="2">
    <location>
        <position position="134"/>
    </location>
</feature>
<feature type="disulfide bond" evidence="3">
    <location>
        <begin position="26"/>
        <end position="37"/>
    </location>
</feature>
<feature type="disulfide bond" evidence="3">
    <location>
        <begin position="54"/>
        <end position="154"/>
    </location>
</feature>
<feature type="disulfide bond" evidence="3">
    <location>
        <begin position="61"/>
        <end position="156"/>
    </location>
</feature>
<feature type="disulfide bond" evidence="3">
    <location>
        <begin position="129"/>
        <end position="146"/>
    </location>
</feature>